<name>PR46B_CHLRE</name>
<evidence type="ECO:0000256" key="1">
    <source>
        <dbReference type="SAM" id="MobiDB-lite"/>
    </source>
</evidence>
<evidence type="ECO:0000269" key="2">
    <source>
    </source>
</evidence>
<evidence type="ECO:0000305" key="3"/>
<protein>
    <recommendedName>
        <fullName>Dynein axonemal assembly factor 19 homolog</fullName>
    </recommendedName>
    <alternativeName>
        <fullName>Coiled-coil domain-containing protein 103 homolog</fullName>
    </alternativeName>
    <alternativeName>
        <fullName>Protein PR46bp</fullName>
    </alternativeName>
</protein>
<feature type="chain" id="PRO_0000419464" description="Dynein axonemal assembly factor 19 homolog">
    <location>
        <begin position="1"/>
        <end position="267"/>
    </location>
</feature>
<feature type="region of interest" description="Disordered" evidence="1">
    <location>
        <begin position="86"/>
        <end position="111"/>
    </location>
</feature>
<feature type="region of interest" description="Disordered" evidence="1">
    <location>
        <begin position="226"/>
        <end position="250"/>
    </location>
</feature>
<sequence>MSSTPDHRPSKVSKELANAACDDFKRKAIDEAKKRAVAQRVDYDTFKNMVLTAHLKPITAPKQLNNDRPLPCWSFGVDGKMLKEQISQSQLPPTTPTEVPTTSGDFTRDWRRNCPTPDDKYRYLKLCGPEGLQAVFRVEISAEVLREMLAVLEACWLGHGGVAEEAEGGAGAALLEAAFVVQVLEAVSTAGRFSLTVKLLGSSAKPTLERLFSGLQSAVLASQAAHQGKQEQPAAAEAPHEEGGSTVDPCSPTRVAALQAMYGLPPS</sequence>
<dbReference type="EMBL" id="AF387366">
    <property type="protein sequence ID" value="AAK70875.1"/>
    <property type="molecule type" value="Genomic_DNA"/>
</dbReference>
<dbReference type="EMBL" id="GU814014">
    <property type="protein sequence ID" value="ADF43150.1"/>
    <property type="molecule type" value="Genomic_DNA"/>
</dbReference>
<dbReference type="EMBL" id="DS496110">
    <property type="protein sequence ID" value="EDP08368.1"/>
    <property type="molecule type" value="Genomic_DNA"/>
</dbReference>
<dbReference type="RefSeq" id="XP_001696391.1">
    <property type="nucleotide sequence ID" value="XM_001696339.1"/>
</dbReference>
<dbReference type="SMR" id="Q94EY1"/>
<dbReference type="PaxDb" id="3055-EDP08368"/>
<dbReference type="GeneID" id="5722152"/>
<dbReference type="KEGG" id="cre:CHLRE_06g253404v5"/>
<dbReference type="eggNOG" id="ENOG502S3J2">
    <property type="taxonomic scope" value="Eukaryota"/>
</dbReference>
<dbReference type="HOGENOM" id="CLU_1043332_0_0_1"/>
<dbReference type="OrthoDB" id="447931at2759"/>
<dbReference type="GO" id="GO:0005858">
    <property type="term" value="C:axonemal dynein complex"/>
    <property type="evidence" value="ECO:0000314"/>
    <property type="project" value="BHF-UCL"/>
</dbReference>
<dbReference type="GO" id="GO:0005930">
    <property type="term" value="C:axoneme"/>
    <property type="evidence" value="ECO:0000314"/>
    <property type="project" value="BHF-UCL"/>
</dbReference>
<dbReference type="GO" id="GO:0031514">
    <property type="term" value="C:motile cilium"/>
    <property type="evidence" value="ECO:0007669"/>
    <property type="project" value="UniProtKB-SubCell"/>
</dbReference>
<dbReference type="GO" id="GO:0036157">
    <property type="term" value="C:outer dynein arm"/>
    <property type="evidence" value="ECO:0000314"/>
    <property type="project" value="BHF-UCL"/>
</dbReference>
<dbReference type="GO" id="GO:0042803">
    <property type="term" value="F:protein homodimerization activity"/>
    <property type="evidence" value="ECO:0000314"/>
    <property type="project" value="BHF-UCL"/>
</dbReference>
<dbReference type="GO" id="GO:0070286">
    <property type="term" value="P:axonemal dynein complex assembly"/>
    <property type="evidence" value="ECO:0007669"/>
    <property type="project" value="InterPro"/>
</dbReference>
<dbReference type="InterPro" id="IPR042422">
    <property type="entry name" value="CC103"/>
</dbReference>
<dbReference type="InterPro" id="IPR031733">
    <property type="entry name" value="Dynein_attach_N"/>
</dbReference>
<dbReference type="InterPro" id="IPR025986">
    <property type="entry name" value="RPAP3-like_C"/>
</dbReference>
<dbReference type="PANTHER" id="PTHR28572">
    <property type="entry name" value="COILED-COIL DOMAIN-CONTAINING PROTEIN 103"/>
    <property type="match status" value="1"/>
</dbReference>
<dbReference type="PANTHER" id="PTHR28572:SF1">
    <property type="entry name" value="COILED-COIL DOMAIN-CONTAINING PROTEIN 103"/>
    <property type="match status" value="1"/>
</dbReference>
<dbReference type="Pfam" id="PF15867">
    <property type="entry name" value="Dynein_attach_N"/>
    <property type="match status" value="1"/>
</dbReference>
<dbReference type="Pfam" id="PF13877">
    <property type="entry name" value="RPAP3_C"/>
    <property type="match status" value="1"/>
</dbReference>
<keyword id="KW-0966">Cell projection</keyword>
<keyword id="KW-0969">Cilium</keyword>
<keyword id="KW-0970">Cilium biogenesis/degradation</keyword>
<keyword id="KW-0963">Cytoplasm</keyword>
<keyword id="KW-0282">Flagellum</keyword>
<organism>
    <name type="scientific">Chlamydomonas reinhardtii</name>
    <name type="common">Chlamydomonas smithii</name>
    <dbReference type="NCBI Taxonomy" id="3055"/>
    <lineage>
        <taxon>Eukaryota</taxon>
        <taxon>Viridiplantae</taxon>
        <taxon>Chlorophyta</taxon>
        <taxon>core chlorophytes</taxon>
        <taxon>Chlorophyceae</taxon>
        <taxon>CS clade</taxon>
        <taxon>Chlamydomonadales</taxon>
        <taxon>Chlamydomonadaceae</taxon>
        <taxon>Chlamydomonas</taxon>
    </lineage>
</organism>
<accession>Q94EY1</accession>
<reference key="1">
    <citation type="journal article" date="2002" name="Genetics">
        <title>Genetic structure of the mating-type locus of Chlamydomonas reinhardtii.</title>
        <authorList>
            <person name="Ferris P.J."/>
            <person name="Armbrust E.V."/>
            <person name="Goodenough U.W."/>
        </authorList>
    </citation>
    <scope>NUCLEOTIDE SEQUENCE [GENOMIC DNA]</scope>
    <source>
        <strain>CC-620</strain>
    </source>
</reference>
<reference key="2">
    <citation type="submission" date="2010-04" db="EMBL/GenBank/DDBJ databases">
        <authorList>
            <person name="Ferris P."/>
            <person name="Olson B.J."/>
            <person name="De Hoff P.L."/>
            <person name="Douglass S."/>
            <person name="Casero D."/>
            <person name="Prochnik S."/>
            <person name="Geng S."/>
            <person name="Rai R."/>
            <person name="Grimwood J."/>
            <person name="Schmutz J."/>
            <person name="Nishii I."/>
            <person name="Hamaji T."/>
            <person name="Nozaki H."/>
            <person name="Pellegrini M."/>
            <person name="Umen J.G."/>
        </authorList>
    </citation>
    <scope>NUCLEOTIDE SEQUENCE [GENOMIC DNA]</scope>
    <source>
        <strain>CC-503</strain>
    </source>
</reference>
<reference key="3">
    <citation type="journal article" date="2007" name="Science">
        <title>The Chlamydomonas genome reveals the evolution of key animal and plant functions.</title>
        <authorList>
            <person name="Merchant S.S."/>
            <person name="Prochnik S.E."/>
            <person name="Vallon O."/>
            <person name="Harris E.H."/>
            <person name="Karpowicz S.J."/>
            <person name="Witman G.B."/>
            <person name="Terry A."/>
            <person name="Salamov A."/>
            <person name="Fritz-Laylin L.K."/>
            <person name="Marechal-Drouard L."/>
            <person name="Marshall W.F."/>
            <person name="Qu L.H."/>
            <person name="Nelson D.R."/>
            <person name="Sanderfoot A.A."/>
            <person name="Spalding M.H."/>
            <person name="Kapitonov V.V."/>
            <person name="Ren Q."/>
            <person name="Ferris P."/>
            <person name="Lindquist E."/>
            <person name="Shapiro H."/>
            <person name="Lucas S.M."/>
            <person name="Grimwood J."/>
            <person name="Schmutz J."/>
            <person name="Cardol P."/>
            <person name="Cerutti H."/>
            <person name="Chanfreau G."/>
            <person name="Chen C.L."/>
            <person name="Cognat V."/>
            <person name="Croft M.T."/>
            <person name="Dent R."/>
            <person name="Dutcher S."/>
            <person name="Fernandez E."/>
            <person name="Fukuzawa H."/>
            <person name="Gonzalez-Ballester D."/>
            <person name="Gonzalez-Halphen D."/>
            <person name="Hallmann A."/>
            <person name="Hanikenne M."/>
            <person name="Hippler M."/>
            <person name="Inwood W."/>
            <person name="Jabbari K."/>
            <person name="Kalanon M."/>
            <person name="Kuras R."/>
            <person name="Lefebvre P.A."/>
            <person name="Lemaire S.D."/>
            <person name="Lobanov A.V."/>
            <person name="Lohr M."/>
            <person name="Manuell A."/>
            <person name="Meier I."/>
            <person name="Mets L."/>
            <person name="Mittag M."/>
            <person name="Mittelmeier T."/>
            <person name="Moroney J.V."/>
            <person name="Moseley J."/>
            <person name="Napoli C."/>
            <person name="Nedelcu A.M."/>
            <person name="Niyogi K."/>
            <person name="Novoselov S.V."/>
            <person name="Paulsen I.T."/>
            <person name="Pazour G.J."/>
            <person name="Purton S."/>
            <person name="Ral J.P."/>
            <person name="Riano-Pachon D.M."/>
            <person name="Riekhof W."/>
            <person name="Rymarquis L."/>
            <person name="Schroda M."/>
            <person name="Stern D."/>
            <person name="Umen J."/>
            <person name="Willows R."/>
            <person name="Wilson N."/>
            <person name="Zimmer S.L."/>
            <person name="Allmer J."/>
            <person name="Balk J."/>
            <person name="Bisova K."/>
            <person name="Chen C.J."/>
            <person name="Elias M."/>
            <person name="Gendler K."/>
            <person name="Hauser C."/>
            <person name="Lamb M.R."/>
            <person name="Ledford H."/>
            <person name="Long J.C."/>
            <person name="Minagawa J."/>
            <person name="Page M.D."/>
            <person name="Pan J."/>
            <person name="Pootakham W."/>
            <person name="Roje S."/>
            <person name="Rose A."/>
            <person name="Stahlberg E."/>
            <person name="Terauchi A.M."/>
            <person name="Yang P."/>
            <person name="Ball S."/>
            <person name="Bowler C."/>
            <person name="Dieckmann C.L."/>
            <person name="Gladyshev V.N."/>
            <person name="Green P."/>
            <person name="Jorgensen R."/>
            <person name="Mayfield S."/>
            <person name="Mueller-Roeber B."/>
            <person name="Rajamani S."/>
            <person name="Sayre R.T."/>
            <person name="Brokstein P."/>
            <person name="Dubchak I."/>
            <person name="Goodstein D."/>
            <person name="Hornick L."/>
            <person name="Huang Y.W."/>
            <person name="Jhaveri J."/>
            <person name="Luo Y."/>
            <person name="Martinez D."/>
            <person name="Ngau W.C."/>
            <person name="Otillar B."/>
            <person name="Poliakov A."/>
            <person name="Porter A."/>
            <person name="Szajkowski L."/>
            <person name="Werner G."/>
            <person name="Zhou K."/>
            <person name="Grigoriev I.V."/>
            <person name="Rokhsar D.S."/>
            <person name="Grossman A.R."/>
        </authorList>
    </citation>
    <scope>NUCLEOTIDE SEQUENCE [LARGE SCALE GENOMIC DNA]</scope>
    <source>
        <strain>CC-503</strain>
    </source>
</reference>
<reference key="4">
    <citation type="journal article" date="2012" name="Nat. Genet.">
        <title>CCDC103 mutations cause primary ciliary dyskinesia by disrupting assembly of ciliary dynein arms.</title>
        <authorList>
            <person name="Panizzi J.R."/>
            <person name="Becker-Heck A."/>
            <person name="Castleman V.H."/>
            <person name="Al-Mutairi D.A."/>
            <person name="Liu Y."/>
            <person name="Loges N.T."/>
            <person name="Pathak N."/>
            <person name="Austin-Tse C."/>
            <person name="Sheridan E."/>
            <person name="Schmidts M."/>
            <person name="Olbrich H."/>
            <person name="Werner C."/>
            <person name="Haffner K."/>
            <person name="Hellman N."/>
            <person name="Chodhari R."/>
            <person name="Gupta A."/>
            <person name="Kramer-Zucker A."/>
            <person name="Olale F."/>
            <person name="Burdine R.D."/>
            <person name="Schier A.F."/>
            <person name="O'Callaghan C."/>
            <person name="Chung E.M."/>
            <person name="Reinhardt R."/>
            <person name="Mitchison H.M."/>
            <person name="King S.M."/>
            <person name="Omran H."/>
            <person name="Drummond I.A."/>
        </authorList>
    </citation>
    <scope>FUNCTION</scope>
    <scope>SUBUNIT</scope>
    <scope>SUBCELLULAR LOCATION</scope>
</reference>
<gene>
    <name type="primary">PR46b</name>
    <name type="ORF">CHLREDRAFT_24002</name>
</gene>
<comment type="function">
    <text evidence="2">Dynein-attachment factor required for cilia motility.</text>
</comment>
<comment type="subunit">
    <text evidence="2">Homodimer.</text>
</comment>
<comment type="subcellular location">
    <subcellularLocation>
        <location evidence="2">Cytoplasm</location>
    </subcellularLocation>
    <subcellularLocation>
        <location evidence="2">Cell projection</location>
        <location evidence="2">Cilium</location>
        <location evidence="2">Flagellum</location>
    </subcellularLocation>
</comment>
<comment type="similarity">
    <text evidence="3">Belongs to the DNAAF19/PR46b family.</text>
</comment>
<proteinExistence type="evidence at protein level"/>